<proteinExistence type="inferred from homology"/>
<evidence type="ECO:0000255" key="1">
    <source>
        <dbReference type="HAMAP-Rule" id="MF_01336"/>
    </source>
</evidence>
<evidence type="ECO:0000305" key="2"/>
<gene>
    <name evidence="1" type="primary">rplY</name>
    <name type="ordered locus">VCM66_1579</name>
</gene>
<protein>
    <recommendedName>
        <fullName evidence="1">Large ribosomal subunit protein bL25</fullName>
    </recommendedName>
    <alternativeName>
        <fullName evidence="2">50S ribosomal protein L25</fullName>
    </alternativeName>
</protein>
<organism>
    <name type="scientific">Vibrio cholerae serotype O1 (strain M66-2)</name>
    <dbReference type="NCBI Taxonomy" id="579112"/>
    <lineage>
        <taxon>Bacteria</taxon>
        <taxon>Pseudomonadati</taxon>
        <taxon>Pseudomonadota</taxon>
        <taxon>Gammaproteobacteria</taxon>
        <taxon>Vibrionales</taxon>
        <taxon>Vibrionaceae</taxon>
        <taxon>Vibrio</taxon>
    </lineage>
</organism>
<comment type="function">
    <text evidence="1">This is one of the proteins that binds to the 5S RNA in the ribosome where it forms part of the central protuberance.</text>
</comment>
<comment type="subunit">
    <text evidence="1">Part of the 50S ribosomal subunit; part of the 5S rRNA/L5/L18/L25 subcomplex. Contacts the 5S rRNA. Binds to the 5S rRNA independently of L5 and L18.</text>
</comment>
<comment type="similarity">
    <text evidence="1">Belongs to the bacterial ribosomal protein bL25 family.</text>
</comment>
<accession>C3LMW6</accession>
<sequence length="92" mass="10490">MKFEAVLRTDLGKGASRRLRNTGYFPAIVYGGEAAPVSISLNHDDVMNQMDKPEFYEAIVLVIDGQEVKVKPQDVQRHAYKPKVEHMDFIRI</sequence>
<name>RL25_VIBCM</name>
<reference key="1">
    <citation type="journal article" date="2008" name="PLoS ONE">
        <title>A recalibrated molecular clock and independent origins for the cholera pandemic clones.</title>
        <authorList>
            <person name="Feng L."/>
            <person name="Reeves P.R."/>
            <person name="Lan R."/>
            <person name="Ren Y."/>
            <person name="Gao C."/>
            <person name="Zhou Z."/>
            <person name="Ren Y."/>
            <person name="Cheng J."/>
            <person name="Wang W."/>
            <person name="Wang J."/>
            <person name="Qian W."/>
            <person name="Li D."/>
            <person name="Wang L."/>
        </authorList>
    </citation>
    <scope>NUCLEOTIDE SEQUENCE [LARGE SCALE GENOMIC DNA]</scope>
    <source>
        <strain>M66-2</strain>
    </source>
</reference>
<keyword id="KW-0687">Ribonucleoprotein</keyword>
<keyword id="KW-0689">Ribosomal protein</keyword>
<keyword id="KW-0694">RNA-binding</keyword>
<keyword id="KW-0699">rRNA-binding</keyword>
<dbReference type="EMBL" id="CP001233">
    <property type="protein sequence ID" value="ACP05892.1"/>
    <property type="molecule type" value="Genomic_DNA"/>
</dbReference>
<dbReference type="RefSeq" id="WP_000667185.1">
    <property type="nucleotide sequence ID" value="NC_012578.1"/>
</dbReference>
<dbReference type="SMR" id="C3LMW6"/>
<dbReference type="GeneID" id="94013653"/>
<dbReference type="KEGG" id="vcm:VCM66_1579"/>
<dbReference type="HOGENOM" id="CLU_137946_0_0_6"/>
<dbReference type="Proteomes" id="UP000001217">
    <property type="component" value="Chromosome I"/>
</dbReference>
<dbReference type="GO" id="GO:0022625">
    <property type="term" value="C:cytosolic large ribosomal subunit"/>
    <property type="evidence" value="ECO:0007669"/>
    <property type="project" value="TreeGrafter"/>
</dbReference>
<dbReference type="GO" id="GO:0008097">
    <property type="term" value="F:5S rRNA binding"/>
    <property type="evidence" value="ECO:0007669"/>
    <property type="project" value="InterPro"/>
</dbReference>
<dbReference type="GO" id="GO:0003735">
    <property type="term" value="F:structural constituent of ribosome"/>
    <property type="evidence" value="ECO:0007669"/>
    <property type="project" value="InterPro"/>
</dbReference>
<dbReference type="GO" id="GO:0006412">
    <property type="term" value="P:translation"/>
    <property type="evidence" value="ECO:0007669"/>
    <property type="project" value="UniProtKB-UniRule"/>
</dbReference>
<dbReference type="CDD" id="cd00495">
    <property type="entry name" value="Ribosomal_L25_TL5_CTC"/>
    <property type="match status" value="1"/>
</dbReference>
<dbReference type="FunFam" id="2.40.240.10:FF:000002">
    <property type="entry name" value="50S ribosomal protein L25"/>
    <property type="match status" value="1"/>
</dbReference>
<dbReference type="Gene3D" id="2.40.240.10">
    <property type="entry name" value="Ribosomal Protein L25, Chain P"/>
    <property type="match status" value="1"/>
</dbReference>
<dbReference type="HAMAP" id="MF_01336">
    <property type="entry name" value="Ribosomal_bL25"/>
    <property type="match status" value="1"/>
</dbReference>
<dbReference type="InterPro" id="IPR020056">
    <property type="entry name" value="Rbsml_bL25/Gln-tRNA_synth_N"/>
</dbReference>
<dbReference type="InterPro" id="IPR011035">
    <property type="entry name" value="Ribosomal_bL25/Gln-tRNA_synth"/>
</dbReference>
<dbReference type="InterPro" id="IPR020055">
    <property type="entry name" value="Ribosomal_bL25_short"/>
</dbReference>
<dbReference type="InterPro" id="IPR029751">
    <property type="entry name" value="Ribosomal_L25_dom"/>
</dbReference>
<dbReference type="InterPro" id="IPR020930">
    <property type="entry name" value="Ribosomal_uL5_bac-type"/>
</dbReference>
<dbReference type="NCBIfam" id="NF004612">
    <property type="entry name" value="PRK05943.1"/>
    <property type="match status" value="1"/>
</dbReference>
<dbReference type="PANTHER" id="PTHR33284">
    <property type="entry name" value="RIBOSOMAL PROTEIN L25/GLN-TRNA SYNTHETASE, ANTI-CODON-BINDING DOMAIN-CONTAINING PROTEIN"/>
    <property type="match status" value="1"/>
</dbReference>
<dbReference type="PANTHER" id="PTHR33284:SF1">
    <property type="entry name" value="RIBOSOMAL PROTEIN L25_GLN-TRNA SYNTHETASE, ANTI-CODON-BINDING DOMAIN-CONTAINING PROTEIN"/>
    <property type="match status" value="1"/>
</dbReference>
<dbReference type="Pfam" id="PF01386">
    <property type="entry name" value="Ribosomal_L25p"/>
    <property type="match status" value="1"/>
</dbReference>
<dbReference type="SUPFAM" id="SSF50715">
    <property type="entry name" value="Ribosomal protein L25-like"/>
    <property type="match status" value="1"/>
</dbReference>
<feature type="chain" id="PRO_1000166196" description="Large ribosomal subunit protein bL25">
    <location>
        <begin position="1"/>
        <end position="92"/>
    </location>
</feature>